<proteinExistence type="evidence at protein level"/>
<feature type="initiator methionine" description="Removed" evidence="3">
    <location>
        <position position="1"/>
    </location>
</feature>
<feature type="chain" id="PRO_0000090027" description="6-phosphogluconate dehydrogenase, NADP(+)-dependent, decarboxylating">
    <location>
        <begin position="2"/>
        <end position="469"/>
    </location>
</feature>
<feature type="active site" description="Proton acceptor" evidence="1">
    <location>
        <position position="182"/>
    </location>
</feature>
<feature type="active site" description="Proton donor" evidence="1">
    <location>
        <position position="189"/>
    </location>
</feature>
<feature type="binding site" evidence="1">
    <location>
        <begin position="10"/>
        <end position="15"/>
    </location>
    <ligand>
        <name>NADP(+)</name>
        <dbReference type="ChEBI" id="CHEBI:58349"/>
    </ligand>
</feature>
<feature type="binding site" evidence="1">
    <location>
        <begin position="33"/>
        <end position="35"/>
    </location>
    <ligand>
        <name>NADP(+)</name>
        <dbReference type="ChEBI" id="CHEBI:58349"/>
    </ligand>
</feature>
<feature type="binding site" evidence="1">
    <location>
        <begin position="74"/>
        <end position="76"/>
    </location>
    <ligand>
        <name>NADP(+)</name>
        <dbReference type="ChEBI" id="CHEBI:58349"/>
    </ligand>
</feature>
<feature type="binding site" evidence="1">
    <location>
        <position position="102"/>
    </location>
    <ligand>
        <name>NADP(+)</name>
        <dbReference type="ChEBI" id="CHEBI:58349"/>
    </ligand>
</feature>
<feature type="binding site" description="in other chain" evidence="1">
    <location>
        <position position="102"/>
    </location>
    <ligand>
        <name>substrate</name>
        <note>ligand shared between dimeric partners</note>
    </ligand>
</feature>
<feature type="binding site" description="in other chain" evidence="1">
    <location>
        <begin position="128"/>
        <end position="130"/>
    </location>
    <ligand>
        <name>substrate</name>
        <note>ligand shared between dimeric partners</note>
    </ligand>
</feature>
<feature type="binding site" description="in other chain" evidence="1">
    <location>
        <begin position="185"/>
        <end position="186"/>
    </location>
    <ligand>
        <name>substrate</name>
        <note>ligand shared between dimeric partners</note>
    </ligand>
</feature>
<feature type="binding site" description="in other chain" evidence="1">
    <location>
        <position position="190"/>
    </location>
    <ligand>
        <name>substrate</name>
        <note>ligand shared between dimeric partners</note>
    </ligand>
</feature>
<feature type="binding site" description="in other chain" evidence="1">
    <location>
        <position position="260"/>
    </location>
    <ligand>
        <name>substrate</name>
        <note>ligand shared between dimeric partners</note>
    </ligand>
</feature>
<feature type="binding site" description="in other chain" evidence="1">
    <location>
        <position position="287"/>
    </location>
    <ligand>
        <name>substrate</name>
        <note>ligand shared between dimeric partners</note>
    </ligand>
</feature>
<feature type="binding site" evidence="1">
    <location>
        <position position="446"/>
    </location>
    <ligand>
        <name>substrate</name>
        <note>ligand shared between dimeric partners</note>
    </ligand>
</feature>
<feature type="binding site" evidence="1">
    <location>
        <position position="452"/>
    </location>
    <ligand>
        <name>substrate</name>
        <note>ligand shared between dimeric partners</note>
    </ligand>
</feature>
<feature type="sequence conflict" description="In Ref. 4; AA sequence." evidence="4" ref="4">
    <original>L</original>
    <variation>W</variation>
    <location>
        <position position="11"/>
    </location>
</feature>
<keyword id="KW-0903">Direct protein sequencing</keyword>
<keyword id="KW-0311">Gluconate utilization</keyword>
<keyword id="KW-0521">NADP</keyword>
<keyword id="KW-0560">Oxidoreductase</keyword>
<keyword id="KW-0570">Pentose shunt</keyword>
<keyword id="KW-1185">Reference proteome</keyword>
<organism>
    <name type="scientific">Bacillus subtilis (strain 168)</name>
    <dbReference type="NCBI Taxonomy" id="224308"/>
    <lineage>
        <taxon>Bacteria</taxon>
        <taxon>Bacillati</taxon>
        <taxon>Bacillota</taxon>
        <taxon>Bacilli</taxon>
        <taxon>Bacillales</taxon>
        <taxon>Bacillaceae</taxon>
        <taxon>Bacillus</taxon>
    </lineage>
</organism>
<protein>
    <recommendedName>
        <fullName>6-phosphogluconate dehydrogenase, NADP(+)-dependent, decarboxylating</fullName>
        <ecNumber>1.1.1.44</ecNumber>
    </recommendedName>
    <alternativeName>
        <fullName>GNTZII</fullName>
    </alternativeName>
</protein>
<name>6PGD_BACSU</name>
<accession>P80859</accession>
<accession>P54546</accession>
<evidence type="ECO:0000250" key="1"/>
<evidence type="ECO:0000269" key="2">
    <source>
    </source>
</evidence>
<evidence type="ECO:0000269" key="3">
    <source>
    </source>
</evidence>
<evidence type="ECO:0000305" key="4"/>
<gene>
    <name type="primary">gndA</name>
    <name type="synonym">yqjI</name>
    <name type="ordered locus">BSU23860</name>
</gene>
<sequence>MSKQQIGVIGLAVMGKNLALNIESRGFSVSVYNRSSSKTEEFLQEAKGKNVVGTYSIEEFVQSLETPRKILLMVKAGTATDATIQSLLPHLEKDDILIDGGNTYYKDTQRRNKELAESGIHFIGTGVSGGEEGALKGPSIMPGGQKEAHELVKPILEAISAKVDGEPCTTYIGPDGAGHYVKMVHNGIEYGDMQLISESYFILKQVLGLSADELHEVFAEWNKGELDSYLIEITADIFTKKDEETGKPLVDVILDKAGQKGTGKWTSQSALDLGVPLPIITESVFARFISAMKEERVKASGLLSGPEVKPVTENKEELIEAVRKALFMSKICSYAQGFAQMKAASEEYNWDLKYGEIAMIFRGGCIIRAAFLQKIKEAYDREPELDNLLLDSYFKNIVESYQGALRQVISLAVAQGVPVPSFSSALAYYDSYRTAVLPANLIQAQRDYFGAHTYERTDKEGIFHTEWMK</sequence>
<comment type="function">
    <text evidence="2">Catalyzes the oxidative decarboxylation of 6-phosphogluconate to ribulose 5-phosphate and CO(2), with concomitant reduction of NADP to NADPH. Is the predominant 6-P-gluconate dehydrogenase isoenzyme in B.subtilis during growth on glucose and gluconate.</text>
</comment>
<comment type="catalytic activity">
    <reaction evidence="2">
        <text>6-phospho-D-gluconate + NADP(+) = D-ribulose 5-phosphate + CO2 + NADPH</text>
        <dbReference type="Rhea" id="RHEA:10116"/>
        <dbReference type="ChEBI" id="CHEBI:16526"/>
        <dbReference type="ChEBI" id="CHEBI:57783"/>
        <dbReference type="ChEBI" id="CHEBI:58121"/>
        <dbReference type="ChEBI" id="CHEBI:58349"/>
        <dbReference type="ChEBI" id="CHEBI:58759"/>
        <dbReference type="EC" id="1.1.1.44"/>
    </reaction>
</comment>
<comment type="pathway">
    <text>Carbohydrate degradation; pentose phosphate pathway; D-ribulose 5-phosphate from D-glucose 6-phosphate (oxidative stage): step 3/3.</text>
</comment>
<comment type="subunit">
    <text evidence="1">Homodimer.</text>
</comment>
<comment type="disruption phenotype">
    <text evidence="2">Cells lacking this gene exhibit a reduced growth on glucose as the sole carbon source, and they do not use the pentose phosphate (PP) pathway at all.</text>
</comment>
<comment type="similarity">
    <text evidence="4">Belongs to the 6-phosphogluconate dehydrogenase family.</text>
</comment>
<comment type="sequence caution" evidence="4">
    <conflict type="frameshift">
        <sequence resource="EMBL-CDS" id="BAA12615"/>
    </conflict>
</comment>
<dbReference type="EC" id="1.1.1.44"/>
<dbReference type="EMBL" id="D84432">
    <property type="protein sequence ID" value="BAA12615.1"/>
    <property type="status" value="ALT_FRAME"/>
    <property type="molecule type" value="Genomic_DNA"/>
</dbReference>
<dbReference type="EMBL" id="AL009126">
    <property type="protein sequence ID" value="CAB14318.2"/>
    <property type="molecule type" value="Genomic_DNA"/>
</dbReference>
<dbReference type="PIR" id="A69964">
    <property type="entry name" value="A69964"/>
</dbReference>
<dbReference type="RefSeq" id="NP_390267.2">
    <property type="nucleotide sequence ID" value="NC_000964.3"/>
</dbReference>
<dbReference type="RefSeq" id="WP_003230365.1">
    <property type="nucleotide sequence ID" value="NZ_OZ025638.1"/>
</dbReference>
<dbReference type="SMR" id="P80859"/>
<dbReference type="FunCoup" id="P80859">
    <property type="interactions" value="534"/>
</dbReference>
<dbReference type="IntAct" id="P80859">
    <property type="interactions" value="1"/>
</dbReference>
<dbReference type="MINT" id="P80859"/>
<dbReference type="STRING" id="224308.BSU23860"/>
<dbReference type="jPOST" id="P80859"/>
<dbReference type="PaxDb" id="224308-BSU23860"/>
<dbReference type="EnsemblBacteria" id="CAB14318">
    <property type="protein sequence ID" value="CAB14318"/>
    <property type="gene ID" value="BSU_23860"/>
</dbReference>
<dbReference type="GeneID" id="938695"/>
<dbReference type="KEGG" id="bsu:BSU23860"/>
<dbReference type="PATRIC" id="fig|224308.179.peg.2599"/>
<dbReference type="eggNOG" id="COG0362">
    <property type="taxonomic scope" value="Bacteria"/>
</dbReference>
<dbReference type="InParanoid" id="P80859"/>
<dbReference type="OrthoDB" id="9804542at2"/>
<dbReference type="PhylomeDB" id="P80859"/>
<dbReference type="BioCyc" id="BSUB:BSU23860-MONOMER"/>
<dbReference type="BioCyc" id="MetaCyc:MONOMER-6842"/>
<dbReference type="BRENDA" id="1.1.1.44">
    <property type="organism ID" value="658"/>
</dbReference>
<dbReference type="UniPathway" id="UPA00115">
    <property type="reaction ID" value="UER00410"/>
</dbReference>
<dbReference type="Proteomes" id="UP000001570">
    <property type="component" value="Chromosome"/>
</dbReference>
<dbReference type="GO" id="GO:0005829">
    <property type="term" value="C:cytosol"/>
    <property type="evidence" value="ECO:0000318"/>
    <property type="project" value="GO_Central"/>
</dbReference>
<dbReference type="GO" id="GO:0050661">
    <property type="term" value="F:NADP binding"/>
    <property type="evidence" value="ECO:0000318"/>
    <property type="project" value="GO_Central"/>
</dbReference>
<dbReference type="GO" id="GO:0004616">
    <property type="term" value="F:phosphogluconate dehydrogenase (decarboxylating) activity"/>
    <property type="evidence" value="ECO:0000318"/>
    <property type="project" value="GO_Central"/>
</dbReference>
<dbReference type="GO" id="GO:0019521">
    <property type="term" value="P:D-gluconate metabolic process"/>
    <property type="evidence" value="ECO:0007669"/>
    <property type="project" value="UniProtKB-KW"/>
</dbReference>
<dbReference type="GO" id="GO:0016054">
    <property type="term" value="P:organic acid catabolic process"/>
    <property type="evidence" value="ECO:0007669"/>
    <property type="project" value="UniProtKB-ARBA"/>
</dbReference>
<dbReference type="GO" id="GO:0009051">
    <property type="term" value="P:pentose-phosphate shunt, oxidative branch"/>
    <property type="evidence" value="ECO:0000318"/>
    <property type="project" value="GO_Central"/>
</dbReference>
<dbReference type="FunFam" id="1.10.1040.10:FF:000002">
    <property type="entry name" value="6-phosphogluconate dehydrogenase, decarboxylating"/>
    <property type="match status" value="1"/>
</dbReference>
<dbReference type="FunFam" id="1.20.5.320:FF:000001">
    <property type="entry name" value="6-phosphogluconate dehydrogenase, decarboxylating"/>
    <property type="match status" value="1"/>
</dbReference>
<dbReference type="FunFam" id="3.40.50.720:FF:000007">
    <property type="entry name" value="6-phosphogluconate dehydrogenase, decarboxylating"/>
    <property type="match status" value="1"/>
</dbReference>
<dbReference type="Gene3D" id="1.20.5.320">
    <property type="entry name" value="6-Phosphogluconate Dehydrogenase, domain 3"/>
    <property type="match status" value="1"/>
</dbReference>
<dbReference type="Gene3D" id="1.10.1040.10">
    <property type="entry name" value="N-(1-d-carboxylethyl)-l-norvaline Dehydrogenase, domain 2"/>
    <property type="match status" value="1"/>
</dbReference>
<dbReference type="Gene3D" id="3.40.50.720">
    <property type="entry name" value="NAD(P)-binding Rossmann-like Domain"/>
    <property type="match status" value="1"/>
</dbReference>
<dbReference type="InterPro" id="IPR008927">
    <property type="entry name" value="6-PGluconate_DH-like_C_sf"/>
</dbReference>
<dbReference type="InterPro" id="IPR013328">
    <property type="entry name" value="6PGD_dom2"/>
</dbReference>
<dbReference type="InterPro" id="IPR006114">
    <property type="entry name" value="6PGDH_C"/>
</dbReference>
<dbReference type="InterPro" id="IPR006113">
    <property type="entry name" value="6PGDH_Gnd/GntZ"/>
</dbReference>
<dbReference type="InterPro" id="IPR006115">
    <property type="entry name" value="6PGDH_NADP-bd"/>
</dbReference>
<dbReference type="InterPro" id="IPR006184">
    <property type="entry name" value="6PGdom_BS"/>
</dbReference>
<dbReference type="InterPro" id="IPR036291">
    <property type="entry name" value="NAD(P)-bd_dom_sf"/>
</dbReference>
<dbReference type="InterPro" id="IPR006183">
    <property type="entry name" value="Pgluconate_DH"/>
</dbReference>
<dbReference type="NCBIfam" id="TIGR00873">
    <property type="entry name" value="gnd"/>
    <property type="match status" value="1"/>
</dbReference>
<dbReference type="NCBIfam" id="NF006765">
    <property type="entry name" value="PRK09287.1"/>
    <property type="match status" value="1"/>
</dbReference>
<dbReference type="PANTHER" id="PTHR11811">
    <property type="entry name" value="6-PHOSPHOGLUCONATE DEHYDROGENASE"/>
    <property type="match status" value="1"/>
</dbReference>
<dbReference type="Pfam" id="PF00393">
    <property type="entry name" value="6PGD"/>
    <property type="match status" value="1"/>
</dbReference>
<dbReference type="Pfam" id="PF03446">
    <property type="entry name" value="NAD_binding_2"/>
    <property type="match status" value="1"/>
</dbReference>
<dbReference type="PIRSF" id="PIRSF000109">
    <property type="entry name" value="6PGD"/>
    <property type="match status" value="1"/>
</dbReference>
<dbReference type="PRINTS" id="PR00076">
    <property type="entry name" value="6PGDHDRGNASE"/>
</dbReference>
<dbReference type="SMART" id="SM01350">
    <property type="entry name" value="6PGD"/>
    <property type="match status" value="1"/>
</dbReference>
<dbReference type="SUPFAM" id="SSF48179">
    <property type="entry name" value="6-phosphogluconate dehydrogenase C-terminal domain-like"/>
    <property type="match status" value="1"/>
</dbReference>
<dbReference type="SUPFAM" id="SSF51735">
    <property type="entry name" value="NAD(P)-binding Rossmann-fold domains"/>
    <property type="match status" value="1"/>
</dbReference>
<dbReference type="PROSITE" id="PS00461">
    <property type="entry name" value="6PGD"/>
    <property type="match status" value="1"/>
</dbReference>
<reference key="1">
    <citation type="journal article" date="1996" name="Microbiology">
        <title>Systematic sequencing of the 283 kb 210 degrees-232 degrees region of the Bacillus subtilis genome containing the skin element and many sporulation genes.</title>
        <authorList>
            <person name="Mizuno M."/>
            <person name="Masuda S."/>
            <person name="Takemaru K."/>
            <person name="Hosono S."/>
            <person name="Sato T."/>
            <person name="Takeuchi M."/>
            <person name="Kobayashi Y."/>
        </authorList>
    </citation>
    <scope>NUCLEOTIDE SEQUENCE [GENOMIC DNA]</scope>
    <source>
        <strain>168 / JH642</strain>
    </source>
</reference>
<reference key="2">
    <citation type="journal article" date="1997" name="Nature">
        <title>The complete genome sequence of the Gram-positive bacterium Bacillus subtilis.</title>
        <authorList>
            <person name="Kunst F."/>
            <person name="Ogasawara N."/>
            <person name="Moszer I."/>
            <person name="Albertini A.M."/>
            <person name="Alloni G."/>
            <person name="Azevedo V."/>
            <person name="Bertero M.G."/>
            <person name="Bessieres P."/>
            <person name="Bolotin A."/>
            <person name="Borchert S."/>
            <person name="Borriss R."/>
            <person name="Boursier L."/>
            <person name="Brans A."/>
            <person name="Braun M."/>
            <person name="Brignell S.C."/>
            <person name="Bron S."/>
            <person name="Brouillet S."/>
            <person name="Bruschi C.V."/>
            <person name="Caldwell B."/>
            <person name="Capuano V."/>
            <person name="Carter N.M."/>
            <person name="Choi S.-K."/>
            <person name="Codani J.-J."/>
            <person name="Connerton I.F."/>
            <person name="Cummings N.J."/>
            <person name="Daniel R.A."/>
            <person name="Denizot F."/>
            <person name="Devine K.M."/>
            <person name="Duesterhoeft A."/>
            <person name="Ehrlich S.D."/>
            <person name="Emmerson P.T."/>
            <person name="Entian K.-D."/>
            <person name="Errington J."/>
            <person name="Fabret C."/>
            <person name="Ferrari E."/>
            <person name="Foulger D."/>
            <person name="Fritz C."/>
            <person name="Fujita M."/>
            <person name="Fujita Y."/>
            <person name="Fuma S."/>
            <person name="Galizzi A."/>
            <person name="Galleron N."/>
            <person name="Ghim S.-Y."/>
            <person name="Glaser P."/>
            <person name="Goffeau A."/>
            <person name="Golightly E.J."/>
            <person name="Grandi G."/>
            <person name="Guiseppi G."/>
            <person name="Guy B.J."/>
            <person name="Haga K."/>
            <person name="Haiech J."/>
            <person name="Harwood C.R."/>
            <person name="Henaut A."/>
            <person name="Hilbert H."/>
            <person name="Holsappel S."/>
            <person name="Hosono S."/>
            <person name="Hullo M.-F."/>
            <person name="Itaya M."/>
            <person name="Jones L.-M."/>
            <person name="Joris B."/>
            <person name="Karamata D."/>
            <person name="Kasahara Y."/>
            <person name="Klaerr-Blanchard M."/>
            <person name="Klein C."/>
            <person name="Kobayashi Y."/>
            <person name="Koetter P."/>
            <person name="Koningstein G."/>
            <person name="Krogh S."/>
            <person name="Kumano M."/>
            <person name="Kurita K."/>
            <person name="Lapidus A."/>
            <person name="Lardinois S."/>
            <person name="Lauber J."/>
            <person name="Lazarevic V."/>
            <person name="Lee S.-M."/>
            <person name="Levine A."/>
            <person name="Liu H."/>
            <person name="Masuda S."/>
            <person name="Mauel C."/>
            <person name="Medigue C."/>
            <person name="Medina N."/>
            <person name="Mellado R.P."/>
            <person name="Mizuno M."/>
            <person name="Moestl D."/>
            <person name="Nakai S."/>
            <person name="Noback M."/>
            <person name="Noone D."/>
            <person name="O'Reilly M."/>
            <person name="Ogawa K."/>
            <person name="Ogiwara A."/>
            <person name="Oudega B."/>
            <person name="Park S.-H."/>
            <person name="Parro V."/>
            <person name="Pohl T.M."/>
            <person name="Portetelle D."/>
            <person name="Porwollik S."/>
            <person name="Prescott A.M."/>
            <person name="Presecan E."/>
            <person name="Pujic P."/>
            <person name="Purnelle B."/>
            <person name="Rapoport G."/>
            <person name="Rey M."/>
            <person name="Reynolds S."/>
            <person name="Rieger M."/>
            <person name="Rivolta C."/>
            <person name="Rocha E."/>
            <person name="Roche B."/>
            <person name="Rose M."/>
            <person name="Sadaie Y."/>
            <person name="Sato T."/>
            <person name="Scanlan E."/>
            <person name="Schleich S."/>
            <person name="Schroeter R."/>
            <person name="Scoffone F."/>
            <person name="Sekiguchi J."/>
            <person name="Sekowska A."/>
            <person name="Seror S.J."/>
            <person name="Serror P."/>
            <person name="Shin B.-S."/>
            <person name="Soldo B."/>
            <person name="Sorokin A."/>
            <person name="Tacconi E."/>
            <person name="Takagi T."/>
            <person name="Takahashi H."/>
            <person name="Takemaru K."/>
            <person name="Takeuchi M."/>
            <person name="Tamakoshi A."/>
            <person name="Tanaka T."/>
            <person name="Terpstra P."/>
            <person name="Tognoni A."/>
            <person name="Tosato V."/>
            <person name="Uchiyama S."/>
            <person name="Vandenbol M."/>
            <person name="Vannier F."/>
            <person name="Vassarotti A."/>
            <person name="Viari A."/>
            <person name="Wambutt R."/>
            <person name="Wedler E."/>
            <person name="Wedler H."/>
            <person name="Weitzenegger T."/>
            <person name="Winters P."/>
            <person name="Wipat A."/>
            <person name="Yamamoto H."/>
            <person name="Yamane K."/>
            <person name="Yasumoto K."/>
            <person name="Yata K."/>
            <person name="Yoshida K."/>
            <person name="Yoshikawa H.-F."/>
            <person name="Zumstein E."/>
            <person name="Yoshikawa H."/>
            <person name="Danchin A."/>
        </authorList>
    </citation>
    <scope>NUCLEOTIDE SEQUENCE [LARGE SCALE GENOMIC DNA]</scope>
    <source>
        <strain>168</strain>
    </source>
</reference>
<reference key="3">
    <citation type="journal article" date="1999" name="Genome Res.">
        <title>Detecting and analyzing DNA sequencing errors: toward a higher quality of the Bacillus subtilis genome sequence.</title>
        <authorList>
            <person name="Medigue C."/>
            <person name="Rose M."/>
            <person name="Viari A."/>
            <person name="Danchin A."/>
        </authorList>
    </citation>
    <scope>SEQUENCE REVISION</scope>
</reference>
<reference key="4">
    <citation type="journal article" date="1997" name="Electrophoresis">
        <title>First steps from a two-dimensional protein index towards a response-regulation map for Bacillus subtilis.</title>
        <authorList>
            <person name="Antelmann H."/>
            <person name="Bernhardt J."/>
            <person name="Schmid R."/>
            <person name="Mach H."/>
            <person name="Voelker U."/>
            <person name="Hecker M."/>
        </authorList>
    </citation>
    <scope>PROTEIN SEQUENCE OF 2-14</scope>
    <source>
        <strain>168 / IS58</strain>
    </source>
</reference>
<reference key="5">
    <citation type="journal article" date="2004" name="J. Bacteriol.">
        <title>The Bacillus subtilis yqjI gene encodes the NADP+-dependent 6-P-gluconate dehydrogenase in the pentose phosphate pathway.</title>
        <authorList>
            <person name="Zamboni N."/>
            <person name="Fischer E."/>
            <person name="Laudert D."/>
            <person name="Aymerich S."/>
            <person name="Hohmann H.P."/>
            <person name="Sauer U."/>
        </authorList>
    </citation>
    <scope>FUNCTION</scope>
    <scope>CATALYTIC ACTIVITY</scope>
    <scope>ROLE IN PP PATHWAY</scope>
    <scope>GENE NAME</scope>
    <scope>DISRUPTION PHENOTYPE</scope>
    <source>
        <strain>168</strain>
    </source>
</reference>